<accession>B1H0M4</accession>
<proteinExistence type="inferred from homology"/>
<organism>
    <name type="scientific">Endomicrobium trichonymphae</name>
    <dbReference type="NCBI Taxonomy" id="1408204"/>
    <lineage>
        <taxon>Bacteria</taxon>
        <taxon>Pseudomonadati</taxon>
        <taxon>Elusimicrobiota</taxon>
        <taxon>Endomicrobiia</taxon>
        <taxon>Endomicrobiales</taxon>
        <taxon>Endomicrobiaceae</taxon>
        <taxon>Candidatus Endomicrobiellum</taxon>
    </lineage>
</organism>
<feature type="chain" id="PRO_0000412684" description="Protein translocase subunit SecD">
    <location>
        <begin position="1"/>
        <end position="475"/>
    </location>
</feature>
<feature type="transmembrane region" description="Helical" evidence="1">
    <location>
        <begin position="7"/>
        <end position="27"/>
    </location>
</feature>
<feature type="transmembrane region" description="Helical" evidence="1">
    <location>
        <begin position="313"/>
        <end position="333"/>
    </location>
</feature>
<feature type="transmembrane region" description="Helical" evidence="1">
    <location>
        <begin position="338"/>
        <end position="358"/>
    </location>
</feature>
<feature type="transmembrane region" description="Helical" evidence="1">
    <location>
        <begin position="364"/>
        <end position="384"/>
    </location>
</feature>
<feature type="transmembrane region" description="Helical" evidence="1">
    <location>
        <begin position="410"/>
        <end position="430"/>
    </location>
</feature>
<feature type="transmembrane region" description="Helical" evidence="1">
    <location>
        <begin position="437"/>
        <end position="457"/>
    </location>
</feature>
<comment type="function">
    <text evidence="1">Part of the Sec protein translocase complex. Interacts with the SecYEG preprotein conducting channel. SecDF uses the proton motive force (PMF) to complete protein translocation after the ATP-dependent function of SecA.</text>
</comment>
<comment type="subunit">
    <text evidence="1">Forms a complex with SecF. Part of the essential Sec protein translocation apparatus which comprises SecA, SecYEG and auxiliary proteins SecDF. Other proteins may also be involved.</text>
</comment>
<comment type="subcellular location">
    <subcellularLocation>
        <location evidence="1">Cell inner membrane</location>
        <topology evidence="1">Multi-pass membrane protein</topology>
    </subcellularLocation>
</comment>
<comment type="similarity">
    <text evidence="1">Belongs to the SecD/SecF family. SecD subfamily.</text>
</comment>
<keyword id="KW-0997">Cell inner membrane</keyword>
<keyword id="KW-1003">Cell membrane</keyword>
<keyword id="KW-0472">Membrane</keyword>
<keyword id="KW-0653">Protein transport</keyword>
<keyword id="KW-0811">Translocation</keyword>
<keyword id="KW-0812">Transmembrane</keyword>
<keyword id="KW-1133">Transmembrane helix</keyword>
<keyword id="KW-0813">Transport</keyword>
<sequence length="475" mass="52426">MKINWKLLITVTLLAFSVWALWPSLKFALMSDEKKEQSEKERDPVLGRTLKLGLDLKGGTYLLLETDTSHLNGAVKVKDAVSRAIEIIRNRIDQFGVTEPMIAKQGDKWIVIQLPGIKDPKAAKDLIGKTALLEFRIVNTSEEARQVLDLIYEKRITPVQYRENSSAYPDIKAVMPEGASVFESRSNMDYYVLDKALLTGAALANAKVEFGGEYGQMMVSIEFNRDGGKIFEYITERNIGKSLAIVLDGIVQSAPVIRTRISRGERASIEGNFNSEDAKVLAAVLRAGALPVPVRLIEERTVGPSLGDDSIKKGFMSSLIGIVLVFLFMFIYYRSSGLIADVALSLNLIILMAIMAYLKFTLTLPGVAGIALTLAMSVDANVLILERIREEIAVGKTAKMAVDAGYQKVFWTIFDANFTTLIAALFLFQFGAGPIKGFAVTLSIGLIVSMFTAVTVTKLIYEFLFKKNLLLKIKI</sequence>
<protein>
    <recommendedName>
        <fullName evidence="1">Protein translocase subunit SecD</fullName>
    </recommendedName>
</protein>
<evidence type="ECO:0000255" key="1">
    <source>
        <dbReference type="HAMAP-Rule" id="MF_01463"/>
    </source>
</evidence>
<name>SECD_ENDTX</name>
<dbReference type="EMBL" id="AP009510">
    <property type="protein sequence ID" value="BAG14056.1"/>
    <property type="molecule type" value="Genomic_DNA"/>
</dbReference>
<dbReference type="RefSeq" id="WP_015423581.1">
    <property type="nucleotide sequence ID" value="NC_020419.1"/>
</dbReference>
<dbReference type="SMR" id="B1H0M4"/>
<dbReference type="STRING" id="471821.TGRD_573"/>
<dbReference type="KEGG" id="rsd:TGRD_573"/>
<dbReference type="PATRIC" id="fig|471821.5.peg.936"/>
<dbReference type="HOGENOM" id="CLU_007894_4_2_0"/>
<dbReference type="Proteomes" id="UP000001691">
    <property type="component" value="Chromosome"/>
</dbReference>
<dbReference type="GO" id="GO:0005886">
    <property type="term" value="C:plasma membrane"/>
    <property type="evidence" value="ECO:0007669"/>
    <property type="project" value="UniProtKB-SubCell"/>
</dbReference>
<dbReference type="GO" id="GO:0015450">
    <property type="term" value="F:protein-transporting ATPase activity"/>
    <property type="evidence" value="ECO:0007669"/>
    <property type="project" value="InterPro"/>
</dbReference>
<dbReference type="GO" id="GO:0065002">
    <property type="term" value="P:intracellular protein transmembrane transport"/>
    <property type="evidence" value="ECO:0007669"/>
    <property type="project" value="UniProtKB-UniRule"/>
</dbReference>
<dbReference type="GO" id="GO:0006605">
    <property type="term" value="P:protein targeting"/>
    <property type="evidence" value="ECO:0007669"/>
    <property type="project" value="UniProtKB-UniRule"/>
</dbReference>
<dbReference type="GO" id="GO:0043952">
    <property type="term" value="P:protein transport by the Sec complex"/>
    <property type="evidence" value="ECO:0007669"/>
    <property type="project" value="UniProtKB-UniRule"/>
</dbReference>
<dbReference type="FunFam" id="1.20.1640.10:FF:000004">
    <property type="entry name" value="Protein translocase subunit SecD"/>
    <property type="match status" value="1"/>
</dbReference>
<dbReference type="Gene3D" id="3.30.1360.200">
    <property type="match status" value="1"/>
</dbReference>
<dbReference type="Gene3D" id="3.30.70.3400">
    <property type="match status" value="1"/>
</dbReference>
<dbReference type="Gene3D" id="1.20.1640.10">
    <property type="entry name" value="Multidrug efflux transporter AcrB transmembrane domain"/>
    <property type="match status" value="1"/>
</dbReference>
<dbReference type="HAMAP" id="MF_01463_B">
    <property type="entry name" value="SecD_B"/>
    <property type="match status" value="1"/>
</dbReference>
<dbReference type="InterPro" id="IPR001036">
    <property type="entry name" value="Acrflvin-R"/>
</dbReference>
<dbReference type="InterPro" id="IPR005791">
    <property type="entry name" value="SecD"/>
</dbReference>
<dbReference type="InterPro" id="IPR022813">
    <property type="entry name" value="SecD/SecF_arch_bac"/>
</dbReference>
<dbReference type="InterPro" id="IPR022646">
    <property type="entry name" value="SecD/SecF_CS"/>
</dbReference>
<dbReference type="InterPro" id="IPR048631">
    <property type="entry name" value="SecD_1st"/>
</dbReference>
<dbReference type="InterPro" id="IPR048634">
    <property type="entry name" value="SecD_SecF_C"/>
</dbReference>
<dbReference type="InterPro" id="IPR055344">
    <property type="entry name" value="SecD_SecF_C_bact"/>
</dbReference>
<dbReference type="InterPro" id="IPR054384">
    <property type="entry name" value="SecDF_P1_head"/>
</dbReference>
<dbReference type="NCBIfam" id="TIGR00916">
    <property type="entry name" value="2A0604s01"/>
    <property type="match status" value="1"/>
</dbReference>
<dbReference type="NCBIfam" id="TIGR01129">
    <property type="entry name" value="secD"/>
    <property type="match status" value="1"/>
</dbReference>
<dbReference type="PANTHER" id="PTHR30081:SF1">
    <property type="entry name" value="PROTEIN TRANSLOCASE SUBUNIT SECD"/>
    <property type="match status" value="1"/>
</dbReference>
<dbReference type="PANTHER" id="PTHR30081">
    <property type="entry name" value="PROTEIN-EXPORT MEMBRANE PROTEIN SEC"/>
    <property type="match status" value="1"/>
</dbReference>
<dbReference type="Pfam" id="PF07549">
    <property type="entry name" value="Sec_GG"/>
    <property type="match status" value="1"/>
</dbReference>
<dbReference type="Pfam" id="PF21760">
    <property type="entry name" value="SecD_1st"/>
    <property type="match status" value="1"/>
</dbReference>
<dbReference type="Pfam" id="PF02355">
    <property type="entry name" value="SecD_SecF_C"/>
    <property type="match status" value="1"/>
</dbReference>
<dbReference type="Pfam" id="PF22599">
    <property type="entry name" value="SecDF_P1_head"/>
    <property type="match status" value="1"/>
</dbReference>
<dbReference type="PRINTS" id="PR00702">
    <property type="entry name" value="ACRIFLAVINRP"/>
</dbReference>
<dbReference type="SUPFAM" id="SSF82866">
    <property type="entry name" value="Multidrug efflux transporter AcrB transmembrane domain"/>
    <property type="match status" value="1"/>
</dbReference>
<gene>
    <name evidence="1" type="primary">secD</name>
    <name type="ordered locus">TGRD_573</name>
</gene>
<reference key="1">
    <citation type="journal article" date="2008" name="Proc. Natl. Acad. Sci. U.S.A.">
        <title>Complete genome of the uncultured termite group 1 bacteria in a single host protist cell.</title>
        <authorList>
            <person name="Hongoh Y."/>
            <person name="Sharma V.K."/>
            <person name="Prakash T."/>
            <person name="Noda S."/>
            <person name="Taylor T.D."/>
            <person name="Kudo T."/>
            <person name="Sakaki Y."/>
            <person name="Toyoda A."/>
            <person name="Hattori M."/>
            <person name="Ohkuma M."/>
        </authorList>
    </citation>
    <scope>NUCLEOTIDE SEQUENCE [LARGE SCALE GENOMIC DNA]</scope>
</reference>